<accession>P66882</accession>
<accession>Q8XFG4</accession>
<feature type="chain" id="PRO_0000111840" description="5'/3'-nucleotidase SurE">
    <location>
        <begin position="1"/>
        <end position="253"/>
    </location>
</feature>
<feature type="binding site" evidence="1">
    <location>
        <position position="8"/>
    </location>
    <ligand>
        <name>a divalent metal cation</name>
        <dbReference type="ChEBI" id="CHEBI:60240"/>
    </ligand>
</feature>
<feature type="binding site" evidence="1">
    <location>
        <position position="9"/>
    </location>
    <ligand>
        <name>a divalent metal cation</name>
        <dbReference type="ChEBI" id="CHEBI:60240"/>
    </ligand>
</feature>
<feature type="binding site" evidence="1">
    <location>
        <position position="39"/>
    </location>
    <ligand>
        <name>a divalent metal cation</name>
        <dbReference type="ChEBI" id="CHEBI:60240"/>
    </ligand>
</feature>
<feature type="binding site" evidence="1">
    <location>
        <position position="92"/>
    </location>
    <ligand>
        <name>a divalent metal cation</name>
        <dbReference type="ChEBI" id="CHEBI:60240"/>
    </ligand>
</feature>
<sequence length="253" mass="26980">MRILLSNDDGVHAPGIQTLAKALREFADVQVVAPDRNRSGASNSLTLESSLRTFTFDNGDIAVQMGTPTDCVYLGVNALMRPRPDIVVSGINAGPNLGDDVIYSGTVAAAMEGRHLGFPALAVSLNGYQHYDTAAAVTCALLRGLSREPLRTGRILNVNVPDLPLAQVKGIRVTRCGSRHPADKVIPQEDPRGNTLYWIGPPGDKYDAGPDTDFAAVDEGYVSVTPLHVDLTAHSAHDVVSDWLDSVGVGTQW</sequence>
<keyword id="KW-0963">Cytoplasm</keyword>
<keyword id="KW-0378">Hydrolase</keyword>
<keyword id="KW-0479">Metal-binding</keyword>
<keyword id="KW-0547">Nucleotide-binding</keyword>
<dbReference type="EC" id="3.1.3.5" evidence="1"/>
<dbReference type="EC" id="3.1.3.6" evidence="1"/>
<dbReference type="EC" id="3.6.1.11" evidence="1"/>
<dbReference type="EMBL" id="AL513382">
    <property type="protein sequence ID" value="CAD06033.1"/>
    <property type="molecule type" value="Genomic_DNA"/>
</dbReference>
<dbReference type="EMBL" id="AE014613">
    <property type="protein sequence ID" value="AAO70385.1"/>
    <property type="molecule type" value="Genomic_DNA"/>
</dbReference>
<dbReference type="RefSeq" id="NP_457316.1">
    <property type="nucleotide sequence ID" value="NC_003198.1"/>
</dbReference>
<dbReference type="RefSeq" id="WP_001221538.1">
    <property type="nucleotide sequence ID" value="NZ_WSUR01000005.1"/>
</dbReference>
<dbReference type="SMR" id="P66882"/>
<dbReference type="STRING" id="220341.gene:17586943"/>
<dbReference type="KEGG" id="stt:t2828"/>
<dbReference type="KEGG" id="sty:STY3052"/>
<dbReference type="PATRIC" id="fig|220341.7.peg.3105"/>
<dbReference type="eggNOG" id="COG0496">
    <property type="taxonomic scope" value="Bacteria"/>
</dbReference>
<dbReference type="HOGENOM" id="CLU_045192_1_2_6"/>
<dbReference type="OMA" id="DCVHIAL"/>
<dbReference type="OrthoDB" id="9780815at2"/>
<dbReference type="Proteomes" id="UP000000541">
    <property type="component" value="Chromosome"/>
</dbReference>
<dbReference type="Proteomes" id="UP000002670">
    <property type="component" value="Chromosome"/>
</dbReference>
<dbReference type="GO" id="GO:0005737">
    <property type="term" value="C:cytoplasm"/>
    <property type="evidence" value="ECO:0007669"/>
    <property type="project" value="UniProtKB-SubCell"/>
</dbReference>
<dbReference type="GO" id="GO:0008254">
    <property type="term" value="F:3'-nucleotidase activity"/>
    <property type="evidence" value="ECO:0007669"/>
    <property type="project" value="UniProtKB-UniRule"/>
</dbReference>
<dbReference type="GO" id="GO:0008253">
    <property type="term" value="F:5'-nucleotidase activity"/>
    <property type="evidence" value="ECO:0007669"/>
    <property type="project" value="UniProtKB-UniRule"/>
</dbReference>
<dbReference type="GO" id="GO:0004309">
    <property type="term" value="F:exopolyphosphatase activity"/>
    <property type="evidence" value="ECO:0007669"/>
    <property type="project" value="UniProtKB-UniRule"/>
</dbReference>
<dbReference type="GO" id="GO:0046872">
    <property type="term" value="F:metal ion binding"/>
    <property type="evidence" value="ECO:0007669"/>
    <property type="project" value="UniProtKB-UniRule"/>
</dbReference>
<dbReference type="GO" id="GO:0000166">
    <property type="term" value="F:nucleotide binding"/>
    <property type="evidence" value="ECO:0007669"/>
    <property type="project" value="UniProtKB-KW"/>
</dbReference>
<dbReference type="FunFam" id="3.40.1210.10:FF:000001">
    <property type="entry name" value="5'/3'-nucleotidase SurE"/>
    <property type="match status" value="1"/>
</dbReference>
<dbReference type="Gene3D" id="3.40.1210.10">
    <property type="entry name" value="Survival protein SurE-like phosphatase/nucleotidase"/>
    <property type="match status" value="1"/>
</dbReference>
<dbReference type="HAMAP" id="MF_00060">
    <property type="entry name" value="SurE"/>
    <property type="match status" value="1"/>
</dbReference>
<dbReference type="InterPro" id="IPR030048">
    <property type="entry name" value="SurE"/>
</dbReference>
<dbReference type="InterPro" id="IPR002828">
    <property type="entry name" value="SurE-like_Pase/nucleotidase"/>
</dbReference>
<dbReference type="InterPro" id="IPR036523">
    <property type="entry name" value="SurE-like_sf"/>
</dbReference>
<dbReference type="NCBIfam" id="NF001488">
    <property type="entry name" value="PRK00346.1-1"/>
    <property type="match status" value="1"/>
</dbReference>
<dbReference type="NCBIfam" id="NF001489">
    <property type="entry name" value="PRK00346.1-3"/>
    <property type="match status" value="1"/>
</dbReference>
<dbReference type="NCBIfam" id="NF001490">
    <property type="entry name" value="PRK00346.1-4"/>
    <property type="match status" value="1"/>
</dbReference>
<dbReference type="NCBIfam" id="TIGR00087">
    <property type="entry name" value="surE"/>
    <property type="match status" value="1"/>
</dbReference>
<dbReference type="PANTHER" id="PTHR30457">
    <property type="entry name" value="5'-NUCLEOTIDASE SURE"/>
    <property type="match status" value="1"/>
</dbReference>
<dbReference type="PANTHER" id="PTHR30457:SF12">
    <property type="entry name" value="5'_3'-NUCLEOTIDASE SURE"/>
    <property type="match status" value="1"/>
</dbReference>
<dbReference type="Pfam" id="PF01975">
    <property type="entry name" value="SurE"/>
    <property type="match status" value="1"/>
</dbReference>
<dbReference type="SUPFAM" id="SSF64167">
    <property type="entry name" value="SurE-like"/>
    <property type="match status" value="1"/>
</dbReference>
<protein>
    <recommendedName>
        <fullName evidence="1">5'/3'-nucleotidase SurE</fullName>
        <ecNumber evidence="1">3.1.3.5</ecNumber>
        <ecNumber evidence="1">3.1.3.6</ecNumber>
    </recommendedName>
    <alternativeName>
        <fullName evidence="1">Exopolyphosphatase</fullName>
        <ecNumber evidence="1">3.6.1.11</ecNumber>
    </alternativeName>
    <alternativeName>
        <fullName evidence="1">Nucleoside monophosphate phosphohydrolase</fullName>
    </alternativeName>
</protein>
<proteinExistence type="inferred from homology"/>
<reference key="1">
    <citation type="journal article" date="2001" name="Nature">
        <title>Complete genome sequence of a multiple drug resistant Salmonella enterica serovar Typhi CT18.</title>
        <authorList>
            <person name="Parkhill J."/>
            <person name="Dougan G."/>
            <person name="James K.D."/>
            <person name="Thomson N.R."/>
            <person name="Pickard D."/>
            <person name="Wain J."/>
            <person name="Churcher C.M."/>
            <person name="Mungall K.L."/>
            <person name="Bentley S.D."/>
            <person name="Holden M.T.G."/>
            <person name="Sebaihia M."/>
            <person name="Baker S."/>
            <person name="Basham D."/>
            <person name="Brooks K."/>
            <person name="Chillingworth T."/>
            <person name="Connerton P."/>
            <person name="Cronin A."/>
            <person name="Davis P."/>
            <person name="Davies R.M."/>
            <person name="Dowd L."/>
            <person name="White N."/>
            <person name="Farrar J."/>
            <person name="Feltwell T."/>
            <person name="Hamlin N."/>
            <person name="Haque A."/>
            <person name="Hien T.T."/>
            <person name="Holroyd S."/>
            <person name="Jagels K."/>
            <person name="Krogh A."/>
            <person name="Larsen T.S."/>
            <person name="Leather S."/>
            <person name="Moule S."/>
            <person name="O'Gaora P."/>
            <person name="Parry C."/>
            <person name="Quail M.A."/>
            <person name="Rutherford K.M."/>
            <person name="Simmonds M."/>
            <person name="Skelton J."/>
            <person name="Stevens K."/>
            <person name="Whitehead S."/>
            <person name="Barrell B.G."/>
        </authorList>
    </citation>
    <scope>NUCLEOTIDE SEQUENCE [LARGE SCALE GENOMIC DNA]</scope>
    <source>
        <strain>CT18</strain>
    </source>
</reference>
<reference key="2">
    <citation type="journal article" date="2003" name="J. Bacteriol.">
        <title>Comparative genomics of Salmonella enterica serovar Typhi strains Ty2 and CT18.</title>
        <authorList>
            <person name="Deng W."/>
            <person name="Liou S.-R."/>
            <person name="Plunkett G. III"/>
            <person name="Mayhew G.F."/>
            <person name="Rose D.J."/>
            <person name="Burland V."/>
            <person name="Kodoyianni V."/>
            <person name="Schwartz D.C."/>
            <person name="Blattner F.R."/>
        </authorList>
    </citation>
    <scope>NUCLEOTIDE SEQUENCE [LARGE SCALE GENOMIC DNA]</scope>
    <source>
        <strain>ATCC 700931 / Ty2</strain>
    </source>
</reference>
<organism>
    <name type="scientific">Salmonella typhi</name>
    <dbReference type="NCBI Taxonomy" id="90370"/>
    <lineage>
        <taxon>Bacteria</taxon>
        <taxon>Pseudomonadati</taxon>
        <taxon>Pseudomonadota</taxon>
        <taxon>Gammaproteobacteria</taxon>
        <taxon>Enterobacterales</taxon>
        <taxon>Enterobacteriaceae</taxon>
        <taxon>Salmonella</taxon>
    </lineage>
</organism>
<name>SURE_SALTI</name>
<gene>
    <name evidence="1" type="primary">surE</name>
    <name type="ordered locus">STY3052</name>
    <name type="ordered locus">t2828</name>
</gene>
<evidence type="ECO:0000255" key="1">
    <source>
        <dbReference type="HAMAP-Rule" id="MF_00060"/>
    </source>
</evidence>
<comment type="function">
    <text evidence="1">Nucleotidase with a broad substrate specificity as it can dephosphorylate various ribo- and deoxyribonucleoside 5'-monophosphates and ribonucleoside 3'-monophosphates with highest affinity to 3'-AMP. Also hydrolyzes polyphosphate (exopolyphosphatase activity) with the preference for short-chain-length substrates (P20-25). Might be involved in the regulation of dNTP and NTP pools, and in the turnover of 3'-mononucleotides produced by numerous intracellular RNases (T1, T2, and F) during the degradation of various RNAs.</text>
</comment>
<comment type="catalytic activity">
    <reaction evidence="1">
        <text>a ribonucleoside 5'-phosphate + H2O = a ribonucleoside + phosphate</text>
        <dbReference type="Rhea" id="RHEA:12484"/>
        <dbReference type="ChEBI" id="CHEBI:15377"/>
        <dbReference type="ChEBI" id="CHEBI:18254"/>
        <dbReference type="ChEBI" id="CHEBI:43474"/>
        <dbReference type="ChEBI" id="CHEBI:58043"/>
        <dbReference type="EC" id="3.1.3.5"/>
    </reaction>
</comment>
<comment type="catalytic activity">
    <reaction evidence="1">
        <text>a ribonucleoside 3'-phosphate + H2O = a ribonucleoside + phosphate</text>
        <dbReference type="Rhea" id="RHEA:10144"/>
        <dbReference type="ChEBI" id="CHEBI:13197"/>
        <dbReference type="ChEBI" id="CHEBI:15377"/>
        <dbReference type="ChEBI" id="CHEBI:18254"/>
        <dbReference type="ChEBI" id="CHEBI:43474"/>
        <dbReference type="EC" id="3.1.3.6"/>
    </reaction>
</comment>
<comment type="catalytic activity">
    <reaction evidence="1">
        <text>[phosphate](n) + H2O = [phosphate](n-1) + phosphate + H(+)</text>
        <dbReference type="Rhea" id="RHEA:21528"/>
        <dbReference type="Rhea" id="RHEA-COMP:9859"/>
        <dbReference type="Rhea" id="RHEA-COMP:14279"/>
        <dbReference type="ChEBI" id="CHEBI:15377"/>
        <dbReference type="ChEBI" id="CHEBI:15378"/>
        <dbReference type="ChEBI" id="CHEBI:16838"/>
        <dbReference type="ChEBI" id="CHEBI:43474"/>
        <dbReference type="EC" id="3.6.1.11"/>
    </reaction>
</comment>
<comment type="cofactor">
    <cofactor evidence="1">
        <name>a divalent metal cation</name>
        <dbReference type="ChEBI" id="CHEBI:60240"/>
    </cofactor>
    <text evidence="1">Binds 1 divalent metal cation per subunit.</text>
</comment>
<comment type="subcellular location">
    <subcellularLocation>
        <location evidence="1">Cytoplasm</location>
    </subcellularLocation>
</comment>
<comment type="similarity">
    <text evidence="1">Belongs to the SurE nucleotidase family.</text>
</comment>